<name>RISB_NEIMA</name>
<proteinExistence type="inferred from homology"/>
<keyword id="KW-0686">Riboflavin biosynthesis</keyword>
<keyword id="KW-0808">Transferase</keyword>
<protein>
    <recommendedName>
        <fullName evidence="1">6,7-dimethyl-8-ribityllumazine synthase</fullName>
        <shortName evidence="1">DMRL synthase</shortName>
        <shortName evidence="1">LS</shortName>
        <shortName evidence="1">Lumazine synthase</shortName>
        <ecNumber evidence="1">2.5.1.78</ecNumber>
    </recommendedName>
</protein>
<sequence length="158" mass="17073">MNTIAPNLDGKHLRIGIVQARFTNEIGSEMLKVCCRTLQELGVADENITVATVPGALEIPIALMNFASSEKFDALIAIGVVIRGETYHFELVSNESGAGVSRVALDYNIPIANAVLTTENDAQAIERIEEKASDAAKVAVECANLVNLLLEEQFEDEE</sequence>
<gene>
    <name evidence="1" type="primary">ribH</name>
    <name type="synonym">ribE</name>
    <name type="ordered locus">NMA0886</name>
</gene>
<comment type="function">
    <text evidence="1">Catalyzes the formation of 6,7-dimethyl-8-ribityllumazine by condensation of 5-amino-6-(D-ribitylamino)uracil with 3,4-dihydroxy-2-butanone 4-phosphate. This is the penultimate step in the biosynthesis of riboflavin.</text>
</comment>
<comment type="catalytic activity">
    <reaction evidence="1">
        <text>(2S)-2-hydroxy-3-oxobutyl phosphate + 5-amino-6-(D-ribitylamino)uracil = 6,7-dimethyl-8-(1-D-ribityl)lumazine + phosphate + 2 H2O + H(+)</text>
        <dbReference type="Rhea" id="RHEA:26152"/>
        <dbReference type="ChEBI" id="CHEBI:15377"/>
        <dbReference type="ChEBI" id="CHEBI:15378"/>
        <dbReference type="ChEBI" id="CHEBI:15934"/>
        <dbReference type="ChEBI" id="CHEBI:43474"/>
        <dbReference type="ChEBI" id="CHEBI:58201"/>
        <dbReference type="ChEBI" id="CHEBI:58830"/>
        <dbReference type="EC" id="2.5.1.78"/>
    </reaction>
</comment>
<comment type="pathway">
    <text evidence="1">Cofactor biosynthesis; riboflavin biosynthesis; riboflavin from 2-hydroxy-3-oxobutyl phosphate and 5-amino-6-(D-ribitylamino)uracil: step 1/2.</text>
</comment>
<comment type="similarity">
    <text evidence="1">Belongs to the DMRL synthase family.</text>
</comment>
<dbReference type="EC" id="2.5.1.78" evidence="1"/>
<dbReference type="EMBL" id="AL157959">
    <property type="protein sequence ID" value="CAM08121.1"/>
    <property type="molecule type" value="Genomic_DNA"/>
</dbReference>
<dbReference type="RefSeq" id="WP_002222781.1">
    <property type="nucleotide sequence ID" value="NC_003116.1"/>
</dbReference>
<dbReference type="SMR" id="P66036"/>
<dbReference type="EnsemblBacteria" id="CAM08121">
    <property type="protein sequence ID" value="CAM08121"/>
    <property type="gene ID" value="NMA0886"/>
</dbReference>
<dbReference type="GeneID" id="93386490"/>
<dbReference type="KEGG" id="nma:NMA0886"/>
<dbReference type="HOGENOM" id="CLU_089358_1_2_4"/>
<dbReference type="UniPathway" id="UPA00275">
    <property type="reaction ID" value="UER00404"/>
</dbReference>
<dbReference type="Proteomes" id="UP000000626">
    <property type="component" value="Chromosome"/>
</dbReference>
<dbReference type="GO" id="GO:0005829">
    <property type="term" value="C:cytosol"/>
    <property type="evidence" value="ECO:0007669"/>
    <property type="project" value="TreeGrafter"/>
</dbReference>
<dbReference type="GO" id="GO:0009349">
    <property type="term" value="C:riboflavin synthase complex"/>
    <property type="evidence" value="ECO:0007669"/>
    <property type="project" value="InterPro"/>
</dbReference>
<dbReference type="GO" id="GO:0000906">
    <property type="term" value="F:6,7-dimethyl-8-ribityllumazine synthase activity"/>
    <property type="evidence" value="ECO:0007669"/>
    <property type="project" value="UniProtKB-UniRule"/>
</dbReference>
<dbReference type="GO" id="GO:0009231">
    <property type="term" value="P:riboflavin biosynthetic process"/>
    <property type="evidence" value="ECO:0007669"/>
    <property type="project" value="UniProtKB-UniRule"/>
</dbReference>
<dbReference type="CDD" id="cd09209">
    <property type="entry name" value="Lumazine_synthase-I"/>
    <property type="match status" value="1"/>
</dbReference>
<dbReference type="FunFam" id="3.40.50.960:FF:000006">
    <property type="entry name" value="6,7-dimethyl-8-ribityllumazine synthase"/>
    <property type="match status" value="1"/>
</dbReference>
<dbReference type="Gene3D" id="3.40.50.960">
    <property type="entry name" value="Lumazine/riboflavin synthase"/>
    <property type="match status" value="1"/>
</dbReference>
<dbReference type="HAMAP" id="MF_00178">
    <property type="entry name" value="Lumazine_synth"/>
    <property type="match status" value="1"/>
</dbReference>
<dbReference type="InterPro" id="IPR034964">
    <property type="entry name" value="LS"/>
</dbReference>
<dbReference type="InterPro" id="IPR002180">
    <property type="entry name" value="LS/RS"/>
</dbReference>
<dbReference type="InterPro" id="IPR036467">
    <property type="entry name" value="LS/RS_sf"/>
</dbReference>
<dbReference type="NCBIfam" id="TIGR00114">
    <property type="entry name" value="lumazine-synth"/>
    <property type="match status" value="1"/>
</dbReference>
<dbReference type="PANTHER" id="PTHR21058:SF0">
    <property type="entry name" value="6,7-DIMETHYL-8-RIBITYLLUMAZINE SYNTHASE"/>
    <property type="match status" value="1"/>
</dbReference>
<dbReference type="PANTHER" id="PTHR21058">
    <property type="entry name" value="6,7-DIMETHYL-8-RIBITYLLUMAZINE SYNTHASE DMRL SYNTHASE LUMAZINE SYNTHASE"/>
    <property type="match status" value="1"/>
</dbReference>
<dbReference type="Pfam" id="PF00885">
    <property type="entry name" value="DMRL_synthase"/>
    <property type="match status" value="1"/>
</dbReference>
<dbReference type="SUPFAM" id="SSF52121">
    <property type="entry name" value="Lumazine synthase"/>
    <property type="match status" value="1"/>
</dbReference>
<accession>P66036</accession>
<accession>A1IQT7</accession>
<accession>Q9JQV6</accession>
<feature type="chain" id="PRO_0000134774" description="6,7-dimethyl-8-ribityllumazine synthase">
    <location>
        <begin position="1"/>
        <end position="158"/>
    </location>
</feature>
<feature type="active site" description="Proton donor" evidence="1">
    <location>
        <position position="88"/>
    </location>
</feature>
<feature type="binding site" evidence="1">
    <location>
        <position position="22"/>
    </location>
    <ligand>
        <name>5-amino-6-(D-ribitylamino)uracil</name>
        <dbReference type="ChEBI" id="CHEBI:15934"/>
    </ligand>
</feature>
<feature type="binding site" evidence="1">
    <location>
        <begin position="56"/>
        <end position="58"/>
    </location>
    <ligand>
        <name>5-amino-6-(D-ribitylamino)uracil</name>
        <dbReference type="ChEBI" id="CHEBI:15934"/>
    </ligand>
</feature>
<feature type="binding site" evidence="1">
    <location>
        <begin position="80"/>
        <end position="82"/>
    </location>
    <ligand>
        <name>5-amino-6-(D-ribitylamino)uracil</name>
        <dbReference type="ChEBI" id="CHEBI:15934"/>
    </ligand>
</feature>
<feature type="binding site" evidence="1">
    <location>
        <begin position="85"/>
        <end position="86"/>
    </location>
    <ligand>
        <name>(2S)-2-hydroxy-3-oxobutyl phosphate</name>
        <dbReference type="ChEBI" id="CHEBI:58830"/>
    </ligand>
</feature>
<feature type="binding site" evidence="1">
    <location>
        <position position="113"/>
    </location>
    <ligand>
        <name>5-amino-6-(D-ribitylamino)uracil</name>
        <dbReference type="ChEBI" id="CHEBI:15934"/>
    </ligand>
</feature>
<feature type="binding site" evidence="1">
    <location>
        <position position="127"/>
    </location>
    <ligand>
        <name>(2S)-2-hydroxy-3-oxobutyl phosphate</name>
        <dbReference type="ChEBI" id="CHEBI:58830"/>
    </ligand>
</feature>
<organism>
    <name type="scientific">Neisseria meningitidis serogroup A / serotype 4A (strain DSM 15465 / Z2491)</name>
    <dbReference type="NCBI Taxonomy" id="122587"/>
    <lineage>
        <taxon>Bacteria</taxon>
        <taxon>Pseudomonadati</taxon>
        <taxon>Pseudomonadota</taxon>
        <taxon>Betaproteobacteria</taxon>
        <taxon>Neisseriales</taxon>
        <taxon>Neisseriaceae</taxon>
        <taxon>Neisseria</taxon>
    </lineage>
</organism>
<reference key="1">
    <citation type="journal article" date="2000" name="Nature">
        <title>Complete DNA sequence of a serogroup A strain of Neisseria meningitidis Z2491.</title>
        <authorList>
            <person name="Parkhill J."/>
            <person name="Achtman M."/>
            <person name="James K.D."/>
            <person name="Bentley S.D."/>
            <person name="Churcher C.M."/>
            <person name="Klee S.R."/>
            <person name="Morelli G."/>
            <person name="Basham D."/>
            <person name="Brown D."/>
            <person name="Chillingworth T."/>
            <person name="Davies R.M."/>
            <person name="Davis P."/>
            <person name="Devlin K."/>
            <person name="Feltwell T."/>
            <person name="Hamlin N."/>
            <person name="Holroyd S."/>
            <person name="Jagels K."/>
            <person name="Leather S."/>
            <person name="Moule S."/>
            <person name="Mungall K.L."/>
            <person name="Quail M.A."/>
            <person name="Rajandream M.A."/>
            <person name="Rutherford K.M."/>
            <person name="Simmonds M."/>
            <person name="Skelton J."/>
            <person name="Whitehead S."/>
            <person name="Spratt B.G."/>
            <person name="Barrell B.G."/>
        </authorList>
    </citation>
    <scope>NUCLEOTIDE SEQUENCE [LARGE SCALE GENOMIC DNA]</scope>
    <source>
        <strain>DSM 15465 / Z2491</strain>
    </source>
</reference>
<evidence type="ECO:0000255" key="1">
    <source>
        <dbReference type="HAMAP-Rule" id="MF_00178"/>
    </source>
</evidence>